<protein>
    <recommendedName>
        <fullName evidence="1">6,7-dimethyl-8-ribityllumazine synthase</fullName>
        <shortName evidence="1">DMRL synthase</shortName>
        <shortName evidence="1">LS</shortName>
        <shortName evidence="1">Lumazine synthase</shortName>
        <ecNumber evidence="1">2.5.1.78</ecNumber>
    </recommendedName>
</protein>
<organism>
    <name type="scientific">Bacillus cereus (strain ZK / E33L)</name>
    <dbReference type="NCBI Taxonomy" id="288681"/>
    <lineage>
        <taxon>Bacteria</taxon>
        <taxon>Bacillati</taxon>
        <taxon>Bacillota</taxon>
        <taxon>Bacilli</taxon>
        <taxon>Bacillales</taxon>
        <taxon>Bacillaceae</taxon>
        <taxon>Bacillus</taxon>
        <taxon>Bacillus cereus group</taxon>
    </lineage>
</organism>
<dbReference type="EC" id="2.5.1.78" evidence="1"/>
<dbReference type="EMBL" id="CP000001">
    <property type="protein sequence ID" value="AAU16399.1"/>
    <property type="molecule type" value="Genomic_DNA"/>
</dbReference>
<dbReference type="RefSeq" id="WP_000230892.1">
    <property type="nucleotide sequence ID" value="NZ_CP009968.1"/>
</dbReference>
<dbReference type="SMR" id="Q635G9"/>
<dbReference type="GeneID" id="87592219"/>
<dbReference type="KEGG" id="bcz:BCE33L3868"/>
<dbReference type="PATRIC" id="fig|288681.22.peg.1532"/>
<dbReference type="UniPathway" id="UPA00275">
    <property type="reaction ID" value="UER00404"/>
</dbReference>
<dbReference type="Proteomes" id="UP000002612">
    <property type="component" value="Chromosome"/>
</dbReference>
<dbReference type="GO" id="GO:0005829">
    <property type="term" value="C:cytosol"/>
    <property type="evidence" value="ECO:0007669"/>
    <property type="project" value="TreeGrafter"/>
</dbReference>
<dbReference type="GO" id="GO:0009349">
    <property type="term" value="C:riboflavin synthase complex"/>
    <property type="evidence" value="ECO:0007669"/>
    <property type="project" value="InterPro"/>
</dbReference>
<dbReference type="GO" id="GO:0000906">
    <property type="term" value="F:6,7-dimethyl-8-ribityllumazine synthase activity"/>
    <property type="evidence" value="ECO:0007669"/>
    <property type="project" value="UniProtKB-UniRule"/>
</dbReference>
<dbReference type="GO" id="GO:0009231">
    <property type="term" value="P:riboflavin biosynthetic process"/>
    <property type="evidence" value="ECO:0007669"/>
    <property type="project" value="UniProtKB-UniRule"/>
</dbReference>
<dbReference type="CDD" id="cd09209">
    <property type="entry name" value="Lumazine_synthase-I"/>
    <property type="match status" value="1"/>
</dbReference>
<dbReference type="FunFam" id="3.40.50.960:FF:000001">
    <property type="entry name" value="6,7-dimethyl-8-ribityllumazine synthase"/>
    <property type="match status" value="1"/>
</dbReference>
<dbReference type="Gene3D" id="3.40.50.960">
    <property type="entry name" value="Lumazine/riboflavin synthase"/>
    <property type="match status" value="1"/>
</dbReference>
<dbReference type="HAMAP" id="MF_00178">
    <property type="entry name" value="Lumazine_synth"/>
    <property type="match status" value="1"/>
</dbReference>
<dbReference type="InterPro" id="IPR034964">
    <property type="entry name" value="LS"/>
</dbReference>
<dbReference type="InterPro" id="IPR002180">
    <property type="entry name" value="LS/RS"/>
</dbReference>
<dbReference type="InterPro" id="IPR036467">
    <property type="entry name" value="LS/RS_sf"/>
</dbReference>
<dbReference type="NCBIfam" id="TIGR00114">
    <property type="entry name" value="lumazine-synth"/>
    <property type="match status" value="1"/>
</dbReference>
<dbReference type="NCBIfam" id="NF000812">
    <property type="entry name" value="PRK00061.1-4"/>
    <property type="match status" value="1"/>
</dbReference>
<dbReference type="PANTHER" id="PTHR21058:SF0">
    <property type="entry name" value="6,7-DIMETHYL-8-RIBITYLLUMAZINE SYNTHASE"/>
    <property type="match status" value="1"/>
</dbReference>
<dbReference type="PANTHER" id="PTHR21058">
    <property type="entry name" value="6,7-DIMETHYL-8-RIBITYLLUMAZINE SYNTHASE DMRL SYNTHASE LUMAZINE SYNTHASE"/>
    <property type="match status" value="1"/>
</dbReference>
<dbReference type="Pfam" id="PF00885">
    <property type="entry name" value="DMRL_synthase"/>
    <property type="match status" value="1"/>
</dbReference>
<dbReference type="SUPFAM" id="SSF52121">
    <property type="entry name" value="Lumazine synthase"/>
    <property type="match status" value="1"/>
</dbReference>
<keyword id="KW-0686">Riboflavin biosynthesis</keyword>
<keyword id="KW-0808">Transferase</keyword>
<proteinExistence type="inferred from homology"/>
<evidence type="ECO:0000255" key="1">
    <source>
        <dbReference type="HAMAP-Rule" id="MF_00178"/>
    </source>
</evidence>
<reference key="1">
    <citation type="journal article" date="2006" name="J. Bacteriol.">
        <title>Pathogenomic sequence analysis of Bacillus cereus and Bacillus thuringiensis isolates closely related to Bacillus anthracis.</title>
        <authorList>
            <person name="Han C.S."/>
            <person name="Xie G."/>
            <person name="Challacombe J.F."/>
            <person name="Altherr M.R."/>
            <person name="Bhotika S.S."/>
            <person name="Bruce D."/>
            <person name="Campbell C.S."/>
            <person name="Campbell M.L."/>
            <person name="Chen J."/>
            <person name="Chertkov O."/>
            <person name="Cleland C."/>
            <person name="Dimitrijevic M."/>
            <person name="Doggett N.A."/>
            <person name="Fawcett J.J."/>
            <person name="Glavina T."/>
            <person name="Goodwin L.A."/>
            <person name="Hill K.K."/>
            <person name="Hitchcock P."/>
            <person name="Jackson P.J."/>
            <person name="Keim P."/>
            <person name="Kewalramani A.R."/>
            <person name="Longmire J."/>
            <person name="Lucas S."/>
            <person name="Malfatti S."/>
            <person name="McMurry K."/>
            <person name="Meincke L.J."/>
            <person name="Misra M."/>
            <person name="Moseman B.L."/>
            <person name="Mundt M."/>
            <person name="Munk A.C."/>
            <person name="Okinaka R.T."/>
            <person name="Parson-Quintana B."/>
            <person name="Reilly L.P."/>
            <person name="Richardson P."/>
            <person name="Robinson D.L."/>
            <person name="Rubin E."/>
            <person name="Saunders E."/>
            <person name="Tapia R."/>
            <person name="Tesmer J.G."/>
            <person name="Thayer N."/>
            <person name="Thompson L.S."/>
            <person name="Tice H."/>
            <person name="Ticknor L.O."/>
            <person name="Wills P.L."/>
            <person name="Brettin T.S."/>
            <person name="Gilna P."/>
        </authorList>
    </citation>
    <scope>NUCLEOTIDE SEQUENCE [LARGE SCALE GENOMIC DNA]</scope>
    <source>
        <strain>ZK / E33L</strain>
    </source>
</reference>
<gene>
    <name evidence="1" type="primary">ribH</name>
    <name type="ordered locus">BCE33L3868</name>
</gene>
<sequence length="153" mass="16246">MVFEGHLVGTGLKVGVVVGRFNEFITSKLLGGALDGLKRHGVEENDIDVAWVPGAFEIPLIAKKMANSGKYDAVITLGTVIRGATTHYDYVCNEVAKGVASLSLQTDIPVIFGVLTTETIEQAIERAGTKAGNKGYESAVAAIEMAHLSKQWA</sequence>
<name>RISB_BACCZ</name>
<accession>Q635G9</accession>
<comment type="function">
    <text evidence="1">Catalyzes the formation of 6,7-dimethyl-8-ribityllumazine by condensation of 5-amino-6-(D-ribitylamino)uracil with 3,4-dihydroxy-2-butanone 4-phosphate. This is the penultimate step in the biosynthesis of riboflavin.</text>
</comment>
<comment type="catalytic activity">
    <reaction evidence="1">
        <text>(2S)-2-hydroxy-3-oxobutyl phosphate + 5-amino-6-(D-ribitylamino)uracil = 6,7-dimethyl-8-(1-D-ribityl)lumazine + phosphate + 2 H2O + H(+)</text>
        <dbReference type="Rhea" id="RHEA:26152"/>
        <dbReference type="ChEBI" id="CHEBI:15377"/>
        <dbReference type="ChEBI" id="CHEBI:15378"/>
        <dbReference type="ChEBI" id="CHEBI:15934"/>
        <dbReference type="ChEBI" id="CHEBI:43474"/>
        <dbReference type="ChEBI" id="CHEBI:58201"/>
        <dbReference type="ChEBI" id="CHEBI:58830"/>
        <dbReference type="EC" id="2.5.1.78"/>
    </reaction>
</comment>
<comment type="pathway">
    <text evidence="1">Cofactor biosynthesis; riboflavin biosynthesis; riboflavin from 2-hydroxy-3-oxobutyl phosphate and 5-amino-6-(D-ribitylamino)uracil: step 1/2.</text>
</comment>
<comment type="subunit">
    <text evidence="1">Forms an icosahedral capsid composed of 60 subunits, arranged as a dodecamer of pentamers.</text>
</comment>
<comment type="similarity">
    <text evidence="1">Belongs to the DMRL synthase family.</text>
</comment>
<feature type="chain" id="PRO_1000040367" description="6,7-dimethyl-8-ribityllumazine synthase">
    <location>
        <begin position="1"/>
        <end position="153"/>
    </location>
</feature>
<feature type="active site" description="Proton donor" evidence="1">
    <location>
        <position position="87"/>
    </location>
</feature>
<feature type="binding site" evidence="1">
    <location>
        <position position="21"/>
    </location>
    <ligand>
        <name>5-amino-6-(D-ribitylamino)uracil</name>
        <dbReference type="ChEBI" id="CHEBI:15934"/>
    </ligand>
</feature>
<feature type="binding site" evidence="1">
    <location>
        <begin position="55"/>
        <end position="57"/>
    </location>
    <ligand>
        <name>5-amino-6-(D-ribitylamino)uracil</name>
        <dbReference type="ChEBI" id="CHEBI:15934"/>
    </ligand>
</feature>
<feature type="binding site" evidence="1">
    <location>
        <begin position="79"/>
        <end position="81"/>
    </location>
    <ligand>
        <name>5-amino-6-(D-ribitylamino)uracil</name>
        <dbReference type="ChEBI" id="CHEBI:15934"/>
    </ligand>
</feature>
<feature type="binding site" evidence="1">
    <location>
        <begin position="84"/>
        <end position="85"/>
    </location>
    <ligand>
        <name>(2S)-2-hydroxy-3-oxobutyl phosphate</name>
        <dbReference type="ChEBI" id="CHEBI:58830"/>
    </ligand>
</feature>
<feature type="binding site" evidence="1">
    <location>
        <position position="112"/>
    </location>
    <ligand>
        <name>5-amino-6-(D-ribitylamino)uracil</name>
        <dbReference type="ChEBI" id="CHEBI:15934"/>
    </ligand>
</feature>
<feature type="binding site" evidence="1">
    <location>
        <position position="126"/>
    </location>
    <ligand>
        <name>(2S)-2-hydroxy-3-oxobutyl phosphate</name>
        <dbReference type="ChEBI" id="CHEBI:58830"/>
    </ligand>
</feature>